<reference key="1">
    <citation type="submission" date="2006-12" db="EMBL/GenBank/DDBJ databases">
        <authorList>
            <person name="Hendrix L."/>
            <person name="Mohamoud Y."/>
            <person name="Radune D."/>
            <person name="Shvartsbeyn A."/>
            <person name="Daugherty S."/>
            <person name="Dodson R."/>
            <person name="Durkin A.S."/>
            <person name="Harkins D."/>
            <person name="Huot H."/>
            <person name="Kothari S.P."/>
            <person name="Madupu R."/>
            <person name="Li J."/>
            <person name="Nelson W.C."/>
            <person name="Shrivastava S."/>
            <person name="Giglio M.G."/>
            <person name="Haft D."/>
            <person name="Selengut J."/>
            <person name="Fraser-Ligget C."/>
            <person name="Seshadri R."/>
        </authorList>
    </citation>
    <scope>NUCLEOTIDE SEQUENCE [LARGE SCALE GENOMIC DNA]</scope>
    <source>
        <strain>ATCC 35685 / KC583 / Herrer 020/F12,63</strain>
    </source>
</reference>
<accession>A1USL4</accession>
<gene>
    <name evidence="1" type="primary">rplC1</name>
    <name type="ordered locus">BARBAKC583_0666</name>
</gene>
<gene>
    <name evidence="1" type="primary">rplC2</name>
    <name type="ordered locus">BARBAKC583_0698</name>
</gene>
<dbReference type="EMBL" id="CP000524">
    <property type="protein sequence ID" value="ABM44611.1"/>
    <property type="molecule type" value="Genomic_DNA"/>
</dbReference>
<dbReference type="EMBL" id="CP000524">
    <property type="protein sequence ID" value="ABM45446.1"/>
    <property type="molecule type" value="Genomic_DNA"/>
</dbReference>
<dbReference type="SMR" id="A1USL4"/>
<dbReference type="STRING" id="360095.BARBAKC583_0666"/>
<dbReference type="GeneID" id="4685002"/>
<dbReference type="KEGG" id="bbk:BARBAKC583_0666"/>
<dbReference type="KEGG" id="bbk:BARBAKC583_0698"/>
<dbReference type="PATRIC" id="fig|360095.6.peg.677"/>
<dbReference type="eggNOG" id="COG0087">
    <property type="taxonomic scope" value="Bacteria"/>
</dbReference>
<dbReference type="HOGENOM" id="CLU_044142_2_0_5"/>
<dbReference type="OrthoDB" id="9806135at2"/>
<dbReference type="Proteomes" id="UP000000643">
    <property type="component" value="Chromosome"/>
</dbReference>
<dbReference type="GO" id="GO:0022625">
    <property type="term" value="C:cytosolic large ribosomal subunit"/>
    <property type="evidence" value="ECO:0007669"/>
    <property type="project" value="TreeGrafter"/>
</dbReference>
<dbReference type="GO" id="GO:0019843">
    <property type="term" value="F:rRNA binding"/>
    <property type="evidence" value="ECO:0007669"/>
    <property type="project" value="UniProtKB-UniRule"/>
</dbReference>
<dbReference type="GO" id="GO:0003735">
    <property type="term" value="F:structural constituent of ribosome"/>
    <property type="evidence" value="ECO:0007669"/>
    <property type="project" value="InterPro"/>
</dbReference>
<dbReference type="GO" id="GO:0006412">
    <property type="term" value="P:translation"/>
    <property type="evidence" value="ECO:0007669"/>
    <property type="project" value="UniProtKB-UniRule"/>
</dbReference>
<dbReference type="FunFam" id="2.40.30.10:FF:000004">
    <property type="entry name" value="50S ribosomal protein L3"/>
    <property type="match status" value="1"/>
</dbReference>
<dbReference type="FunFam" id="3.30.160.810:FF:000001">
    <property type="entry name" value="50S ribosomal protein L3"/>
    <property type="match status" value="1"/>
</dbReference>
<dbReference type="Gene3D" id="3.30.160.810">
    <property type="match status" value="1"/>
</dbReference>
<dbReference type="Gene3D" id="2.40.30.10">
    <property type="entry name" value="Translation factors"/>
    <property type="match status" value="1"/>
</dbReference>
<dbReference type="HAMAP" id="MF_01325_B">
    <property type="entry name" value="Ribosomal_uL3_B"/>
    <property type="match status" value="1"/>
</dbReference>
<dbReference type="InterPro" id="IPR000597">
    <property type="entry name" value="Ribosomal_uL3"/>
</dbReference>
<dbReference type="InterPro" id="IPR019927">
    <property type="entry name" value="Ribosomal_uL3_bac/org-type"/>
</dbReference>
<dbReference type="InterPro" id="IPR019926">
    <property type="entry name" value="Ribosomal_uL3_CS"/>
</dbReference>
<dbReference type="InterPro" id="IPR009000">
    <property type="entry name" value="Transl_B-barrel_sf"/>
</dbReference>
<dbReference type="NCBIfam" id="TIGR03625">
    <property type="entry name" value="L3_bact"/>
    <property type="match status" value="1"/>
</dbReference>
<dbReference type="PANTHER" id="PTHR11229">
    <property type="entry name" value="50S RIBOSOMAL PROTEIN L3"/>
    <property type="match status" value="1"/>
</dbReference>
<dbReference type="PANTHER" id="PTHR11229:SF16">
    <property type="entry name" value="LARGE RIBOSOMAL SUBUNIT PROTEIN UL3C"/>
    <property type="match status" value="1"/>
</dbReference>
<dbReference type="Pfam" id="PF00297">
    <property type="entry name" value="Ribosomal_L3"/>
    <property type="match status" value="1"/>
</dbReference>
<dbReference type="SUPFAM" id="SSF50447">
    <property type="entry name" value="Translation proteins"/>
    <property type="match status" value="1"/>
</dbReference>
<dbReference type="PROSITE" id="PS00474">
    <property type="entry name" value="RIBOSOMAL_L3"/>
    <property type="match status" value="1"/>
</dbReference>
<proteinExistence type="inferred from homology"/>
<sequence>MRSGVITQKLGMTSIYNDTGERVPVTVLRLENCQVIAQRTVEKNGYTAVQLGVGLAKFEKTSKALRGHFSKALVEPKAKIVEFRVSSDNLLDVGTEITVEHFVPGQRVDVTGTSIGKGFAGVMKRHNFGGHRASHGNSITHRAHGSTGQCQDPGKVFKGKKMAGHMGQVRVTTQNVEVVSIDVDRGLILVRGAVSGSKGAWVLVRDAVKKRLPDNAPRPAGVRSPANVKVKPATPIAEVSVAEGVE</sequence>
<keyword id="KW-0488">Methylation</keyword>
<keyword id="KW-0687">Ribonucleoprotein</keyword>
<keyword id="KW-0689">Ribosomal protein</keyword>
<keyword id="KW-0694">RNA-binding</keyword>
<keyword id="KW-0699">rRNA-binding</keyword>
<name>RL3_BARBK</name>
<protein>
    <recommendedName>
        <fullName evidence="1">Large ribosomal subunit protein uL3</fullName>
    </recommendedName>
    <alternativeName>
        <fullName evidence="2">50S ribosomal protein L3</fullName>
    </alternativeName>
</protein>
<evidence type="ECO:0000255" key="1">
    <source>
        <dbReference type="HAMAP-Rule" id="MF_01325"/>
    </source>
</evidence>
<evidence type="ECO:0000305" key="2"/>
<feature type="chain" id="PRO_0000353593" description="Large ribosomal subunit protein uL3">
    <location>
        <begin position="1"/>
        <end position="246"/>
    </location>
</feature>
<feature type="modified residue" description="N5-methylglutamine" evidence="1">
    <location>
        <position position="151"/>
    </location>
</feature>
<comment type="function">
    <text evidence="1">One of the primary rRNA binding proteins, it binds directly near the 3'-end of the 23S rRNA, where it nucleates assembly of the 50S subunit.</text>
</comment>
<comment type="subunit">
    <text evidence="1">Part of the 50S ribosomal subunit. Forms a cluster with proteins L14 and L19.</text>
</comment>
<comment type="PTM">
    <text evidence="1">Methylated by PrmB.</text>
</comment>
<comment type="similarity">
    <text evidence="1">Belongs to the universal ribosomal protein uL3 family.</text>
</comment>
<organism>
    <name type="scientific">Bartonella bacilliformis (strain ATCC 35685 / KC583 / Herrer 020/F12,63)</name>
    <dbReference type="NCBI Taxonomy" id="360095"/>
    <lineage>
        <taxon>Bacteria</taxon>
        <taxon>Pseudomonadati</taxon>
        <taxon>Pseudomonadota</taxon>
        <taxon>Alphaproteobacteria</taxon>
        <taxon>Hyphomicrobiales</taxon>
        <taxon>Bartonellaceae</taxon>
        <taxon>Bartonella</taxon>
    </lineage>
</organism>